<name>NADB_NEIMB</name>
<evidence type="ECO:0000250" key="1">
    <source>
        <dbReference type="UniProtKB" id="P10902"/>
    </source>
</evidence>
<evidence type="ECO:0000305" key="2"/>
<dbReference type="EC" id="1.4.3.16" evidence="1"/>
<dbReference type="EMBL" id="AE002098">
    <property type="protein sequence ID" value="AAF40832.1"/>
    <property type="molecule type" value="Genomic_DNA"/>
</dbReference>
<dbReference type="PIR" id="H81203">
    <property type="entry name" value="H81203"/>
</dbReference>
<dbReference type="RefSeq" id="NP_273441.1">
    <property type="nucleotide sequence ID" value="NC_003112.2"/>
</dbReference>
<dbReference type="RefSeq" id="WP_002222010.1">
    <property type="nucleotide sequence ID" value="NC_003112.2"/>
</dbReference>
<dbReference type="SMR" id="Q9K107"/>
<dbReference type="FunCoup" id="Q9K107">
    <property type="interactions" value="421"/>
</dbReference>
<dbReference type="STRING" id="122586.NMB0392"/>
<dbReference type="PaxDb" id="122586-NMB0392"/>
<dbReference type="KEGG" id="nme:NMB0392"/>
<dbReference type="PATRIC" id="fig|122586.8.peg.491"/>
<dbReference type="HOGENOM" id="CLU_014312_3_0_4"/>
<dbReference type="InParanoid" id="Q9K107"/>
<dbReference type="OrthoDB" id="9806724at2"/>
<dbReference type="UniPathway" id="UPA00253">
    <property type="reaction ID" value="UER00326"/>
</dbReference>
<dbReference type="Proteomes" id="UP000000425">
    <property type="component" value="Chromosome"/>
</dbReference>
<dbReference type="GO" id="GO:0005737">
    <property type="term" value="C:cytoplasm"/>
    <property type="evidence" value="ECO:0007669"/>
    <property type="project" value="UniProtKB-SubCell"/>
</dbReference>
<dbReference type="GO" id="GO:0008734">
    <property type="term" value="F:L-aspartate oxidase activity"/>
    <property type="evidence" value="ECO:0000318"/>
    <property type="project" value="GO_Central"/>
</dbReference>
<dbReference type="GO" id="GO:0000166">
    <property type="term" value="F:nucleotide binding"/>
    <property type="evidence" value="ECO:0007669"/>
    <property type="project" value="UniProtKB-KW"/>
</dbReference>
<dbReference type="GO" id="GO:0034628">
    <property type="term" value="P:'de novo' NAD biosynthetic process from L-aspartate"/>
    <property type="evidence" value="ECO:0000318"/>
    <property type="project" value="GO_Central"/>
</dbReference>
<dbReference type="FunFam" id="3.90.700.10:FF:000002">
    <property type="entry name" value="L-aspartate oxidase"/>
    <property type="match status" value="1"/>
</dbReference>
<dbReference type="Gene3D" id="3.50.50.60">
    <property type="entry name" value="FAD/NAD(P)-binding domain"/>
    <property type="match status" value="1"/>
</dbReference>
<dbReference type="Gene3D" id="1.20.58.100">
    <property type="entry name" value="Fumarate reductase/succinate dehydrogenase flavoprotein-like, C-terminal domain"/>
    <property type="match status" value="1"/>
</dbReference>
<dbReference type="Gene3D" id="3.90.700.10">
    <property type="entry name" value="Succinate dehydrogenase/fumarate reductase flavoprotein, catalytic domain"/>
    <property type="match status" value="1"/>
</dbReference>
<dbReference type="InterPro" id="IPR003953">
    <property type="entry name" value="FAD-dep_OxRdtase_2_FAD-bd"/>
</dbReference>
<dbReference type="InterPro" id="IPR036188">
    <property type="entry name" value="FAD/NAD-bd_sf"/>
</dbReference>
<dbReference type="InterPro" id="IPR037099">
    <property type="entry name" value="Fum_R/Succ_DH_flav-like_C_sf"/>
</dbReference>
<dbReference type="InterPro" id="IPR005288">
    <property type="entry name" value="NadB"/>
</dbReference>
<dbReference type="InterPro" id="IPR027477">
    <property type="entry name" value="Succ_DH/fumarate_Rdtase_cat_sf"/>
</dbReference>
<dbReference type="NCBIfam" id="TIGR00551">
    <property type="entry name" value="nadB"/>
    <property type="match status" value="1"/>
</dbReference>
<dbReference type="PANTHER" id="PTHR42716">
    <property type="entry name" value="L-ASPARTATE OXIDASE"/>
    <property type="match status" value="1"/>
</dbReference>
<dbReference type="PANTHER" id="PTHR42716:SF2">
    <property type="entry name" value="L-ASPARTATE OXIDASE, CHLOROPLASTIC"/>
    <property type="match status" value="1"/>
</dbReference>
<dbReference type="Pfam" id="PF00890">
    <property type="entry name" value="FAD_binding_2"/>
    <property type="match status" value="1"/>
</dbReference>
<dbReference type="PRINTS" id="PR00368">
    <property type="entry name" value="FADPNR"/>
</dbReference>
<dbReference type="SUPFAM" id="SSF51905">
    <property type="entry name" value="FAD/NAD(P)-binding domain"/>
    <property type="match status" value="1"/>
</dbReference>
<dbReference type="SUPFAM" id="SSF46977">
    <property type="entry name" value="Succinate dehydrogenase/fumarate reductase flavoprotein C-terminal domain"/>
    <property type="match status" value="1"/>
</dbReference>
<dbReference type="SUPFAM" id="SSF56425">
    <property type="entry name" value="Succinate dehydrogenase/fumarate reductase flavoprotein, catalytic domain"/>
    <property type="match status" value="1"/>
</dbReference>
<gene>
    <name type="primary">nadB</name>
    <name type="ordered locus">NMB0392</name>
</gene>
<organism>
    <name type="scientific">Neisseria meningitidis serogroup B (strain ATCC BAA-335 / MC58)</name>
    <dbReference type="NCBI Taxonomy" id="122586"/>
    <lineage>
        <taxon>Bacteria</taxon>
        <taxon>Pseudomonadati</taxon>
        <taxon>Pseudomonadota</taxon>
        <taxon>Betaproteobacteria</taxon>
        <taxon>Neisseriales</taxon>
        <taxon>Neisseriaceae</taxon>
        <taxon>Neisseria</taxon>
    </lineage>
</organism>
<keyword id="KW-0963">Cytoplasm</keyword>
<keyword id="KW-0274">FAD</keyword>
<keyword id="KW-0285">Flavoprotein</keyword>
<keyword id="KW-0547">Nucleotide-binding</keyword>
<keyword id="KW-0560">Oxidoreductase</keyword>
<keyword id="KW-0662">Pyridine nucleotide biosynthesis</keyword>
<keyword id="KW-1185">Reference proteome</keyword>
<sequence length="502" mass="54563">MQTDCDVLIAGNGLAALTLALSLPESFRIVILCKNRLDDTASRHAQGGIAAAWSGEDDIEKHVADTLEAGAGLCDEAAVRAILSQGKPAIEWLLAQGVAFDRNHNGLHLTREGGHTCRRIAHVADYTGEAVMQSLIAQIRRRPNIRVCERQMALDIQTESGAACGLTVLDCRTQETYRIRARHTVLAGGGLGQIYAATTTPPECTGDAIAMAIRAGCAVGNLEFIQFHPTGLARPSENGRTFLISEAVRGEGGILTNQAGERFMPHYDRRAELAPRDIVARAIAAEIAKQTQDFVSLDISHQPAAFVRRHFPSIHRHCLSQCGLDITRQAIPVRPVQHYTCGGIQTDPCGRTSLPQLYALGETACTGLHGANRLASNSLLECVVTARLCAQAIADGQAFQAEPFQRPSESLSAEAGIFSDDLQNTFSRPVLQTFNQRHLGILRNDTGLRRAIAQLQLWKQNQAEPHTASEYENRNLLECSLAVAQAAYRRRQNIGAHFNSDC</sequence>
<accession>Q9K107</accession>
<reference key="1">
    <citation type="journal article" date="2000" name="Science">
        <title>Complete genome sequence of Neisseria meningitidis serogroup B strain MC58.</title>
        <authorList>
            <person name="Tettelin H."/>
            <person name="Saunders N.J."/>
            <person name="Heidelberg J.F."/>
            <person name="Jeffries A.C."/>
            <person name="Nelson K.E."/>
            <person name="Eisen J.A."/>
            <person name="Ketchum K.A."/>
            <person name="Hood D.W."/>
            <person name="Peden J.F."/>
            <person name="Dodson R.J."/>
            <person name="Nelson W.C."/>
            <person name="Gwinn M.L."/>
            <person name="DeBoy R.T."/>
            <person name="Peterson J.D."/>
            <person name="Hickey E.K."/>
            <person name="Haft D.H."/>
            <person name="Salzberg S.L."/>
            <person name="White O."/>
            <person name="Fleischmann R.D."/>
            <person name="Dougherty B.A."/>
            <person name="Mason T.M."/>
            <person name="Ciecko A."/>
            <person name="Parksey D.S."/>
            <person name="Blair E."/>
            <person name="Cittone H."/>
            <person name="Clark E.B."/>
            <person name="Cotton M.D."/>
            <person name="Utterback T.R."/>
            <person name="Khouri H.M."/>
            <person name="Qin H."/>
            <person name="Vamathevan J.J."/>
            <person name="Gill J."/>
            <person name="Scarlato V."/>
            <person name="Masignani V."/>
            <person name="Pizza M."/>
            <person name="Grandi G."/>
            <person name="Sun L."/>
            <person name="Smith H.O."/>
            <person name="Fraser C.M."/>
            <person name="Moxon E.R."/>
            <person name="Rappuoli R."/>
            <person name="Venter J.C."/>
        </authorList>
    </citation>
    <scope>NUCLEOTIDE SEQUENCE [LARGE SCALE GENOMIC DNA]</scope>
    <source>
        <strain>ATCC BAA-335 / MC58</strain>
    </source>
</reference>
<protein>
    <recommendedName>
        <fullName evidence="1">L-aspartate oxidase</fullName>
        <shortName evidence="1">LASPO</shortName>
        <ecNumber evidence="1">1.4.3.16</ecNumber>
    </recommendedName>
    <alternativeName>
        <fullName>Quinolinate synthase B</fullName>
    </alternativeName>
</protein>
<proteinExistence type="inferred from homology"/>
<comment type="function">
    <text evidence="1">Catalyzes the oxidation of L-aspartate to iminoaspartate, the first step in the de novo biosynthesis of NAD(+).</text>
</comment>
<comment type="catalytic activity">
    <reaction evidence="1">
        <text>L-aspartate + O2 = iminosuccinate + H2O2</text>
        <dbReference type="Rhea" id="RHEA:25876"/>
        <dbReference type="ChEBI" id="CHEBI:15379"/>
        <dbReference type="ChEBI" id="CHEBI:16240"/>
        <dbReference type="ChEBI" id="CHEBI:29991"/>
        <dbReference type="ChEBI" id="CHEBI:77875"/>
        <dbReference type="EC" id="1.4.3.16"/>
    </reaction>
    <physiologicalReaction direction="left-to-right" evidence="1">
        <dbReference type="Rhea" id="RHEA:25877"/>
    </physiologicalReaction>
</comment>
<comment type="cofactor">
    <cofactor evidence="1">
        <name>FAD</name>
        <dbReference type="ChEBI" id="CHEBI:57692"/>
    </cofactor>
    <text evidence="1">Binds 1 FAD per subunit.</text>
</comment>
<comment type="pathway">
    <text evidence="1">Cofactor biosynthesis; NAD(+) biosynthesis; iminoaspartate from L-aspartate (oxidase route): step 1/1.</text>
</comment>
<comment type="subcellular location">
    <subcellularLocation>
        <location evidence="1">Cytoplasm</location>
    </subcellularLocation>
</comment>
<comment type="similarity">
    <text evidence="2">Belongs to the FAD-dependent oxidoreductase 2 family. NadB subfamily.</text>
</comment>
<feature type="chain" id="PRO_0000184392" description="L-aspartate oxidase">
    <location>
        <begin position="1"/>
        <end position="502"/>
    </location>
</feature>
<feature type="active site" description="Proton donor/acceptor" evidence="1">
    <location>
        <position position="276"/>
    </location>
</feature>
<feature type="binding site" evidence="1">
    <location>
        <begin position="12"/>
        <end position="15"/>
    </location>
    <ligand>
        <name>FAD</name>
        <dbReference type="ChEBI" id="CHEBI:57692"/>
    </ligand>
</feature>
<feature type="binding site" evidence="1">
    <location>
        <position position="34"/>
    </location>
    <ligand>
        <name>FAD</name>
        <dbReference type="ChEBI" id="CHEBI:57692"/>
    </ligand>
</feature>
<feature type="binding site" evidence="1">
    <location>
        <begin position="41"/>
        <end position="48"/>
    </location>
    <ligand>
        <name>FAD</name>
        <dbReference type="ChEBI" id="CHEBI:57692"/>
    </ligand>
</feature>
<feature type="binding site" evidence="1">
    <location>
        <position position="207"/>
    </location>
    <ligand>
        <name>FAD</name>
        <dbReference type="ChEBI" id="CHEBI:57692"/>
    </ligand>
</feature>
<feature type="binding site" evidence="1">
    <location>
        <position position="362"/>
    </location>
    <ligand>
        <name>FAD</name>
        <dbReference type="ChEBI" id="CHEBI:57692"/>
    </ligand>
</feature>
<feature type="binding site" evidence="1">
    <location>
        <begin position="378"/>
        <end position="379"/>
    </location>
    <ligand>
        <name>FAD</name>
        <dbReference type="ChEBI" id="CHEBI:57692"/>
    </ligand>
</feature>
<feature type="site" description="Important in orienting the L-aspartate substrate" evidence="1">
    <location>
        <position position="112"/>
    </location>
</feature>